<evidence type="ECO:0000255" key="1">
    <source>
        <dbReference type="HAMAP-Rule" id="MF_00183"/>
    </source>
</evidence>
<name>DXR_TROWT</name>
<gene>
    <name evidence="1" type="primary">dxr</name>
    <name type="ordered locus">TWT_089</name>
</gene>
<accession>Q83GY8</accession>
<sequence length="368" mass="39874">MQRVIIVGSTGSIGTQAIDFILKNRDSFLVVGLAASTQTSLLREQAQVLGTKNTAQGASEAAELIEATEADVVLNAITGAAGLLSTYATLKTGKRLALANKESLIMGGKYFLDMTTFKGQITPVDSEHSAIAQAMKSGKFSEVNKLILTASGGPFYDRESLEGITLKDALDHPTWNMGPMISINSATMFNKGLEIIEAHLLFGIPYSQIDVVIHPQSIVHSMVEYKDGSVIAQASVADMTLPIGYALSWPNRALNAVRPLEWGARQRWDFLPPTENSMRSINLARRAGEAGGVYPAVLNASNECAVEAFMAGKISFARIIHVTETVFNLYTKQHTNRESAKNPIEVILEEDARTRELAKTVIENMSAD</sequence>
<keyword id="KW-0414">Isoprene biosynthesis</keyword>
<keyword id="KW-0464">Manganese</keyword>
<keyword id="KW-0479">Metal-binding</keyword>
<keyword id="KW-0521">NADP</keyword>
<keyword id="KW-0560">Oxidoreductase</keyword>
<keyword id="KW-1185">Reference proteome</keyword>
<comment type="function">
    <text evidence="1">Catalyzes the NADPH-dependent rearrangement and reduction of 1-deoxy-D-xylulose-5-phosphate (DXP) to 2-C-methyl-D-erythritol 4-phosphate (MEP).</text>
</comment>
<comment type="catalytic activity">
    <reaction evidence="1">
        <text>2-C-methyl-D-erythritol 4-phosphate + NADP(+) = 1-deoxy-D-xylulose 5-phosphate + NADPH + H(+)</text>
        <dbReference type="Rhea" id="RHEA:13717"/>
        <dbReference type="ChEBI" id="CHEBI:15378"/>
        <dbReference type="ChEBI" id="CHEBI:57783"/>
        <dbReference type="ChEBI" id="CHEBI:57792"/>
        <dbReference type="ChEBI" id="CHEBI:58262"/>
        <dbReference type="ChEBI" id="CHEBI:58349"/>
        <dbReference type="EC" id="1.1.1.267"/>
    </reaction>
    <physiologicalReaction direction="right-to-left" evidence="1">
        <dbReference type="Rhea" id="RHEA:13719"/>
    </physiologicalReaction>
</comment>
<comment type="cofactor">
    <cofactor evidence="1">
        <name>Mg(2+)</name>
        <dbReference type="ChEBI" id="CHEBI:18420"/>
    </cofactor>
    <cofactor evidence="1">
        <name>Mn(2+)</name>
        <dbReference type="ChEBI" id="CHEBI:29035"/>
    </cofactor>
</comment>
<comment type="pathway">
    <text evidence="1">Isoprenoid biosynthesis; isopentenyl diphosphate biosynthesis via DXP pathway; isopentenyl diphosphate from 1-deoxy-D-xylulose 5-phosphate: step 1/6.</text>
</comment>
<comment type="similarity">
    <text evidence="1">Belongs to the DXR family.</text>
</comment>
<proteinExistence type="inferred from homology"/>
<reference key="1">
    <citation type="journal article" date="2003" name="Genome Res.">
        <title>Tropheryma whipplei twist: a human pathogenic Actinobacteria with a reduced genome.</title>
        <authorList>
            <person name="Raoult D."/>
            <person name="Ogata H."/>
            <person name="Audic S."/>
            <person name="Robert C."/>
            <person name="Suhre K."/>
            <person name="Drancourt M."/>
            <person name="Claverie J.-M."/>
        </authorList>
    </citation>
    <scope>NUCLEOTIDE SEQUENCE [LARGE SCALE GENOMIC DNA]</scope>
    <source>
        <strain>Twist</strain>
    </source>
</reference>
<feature type="chain" id="PRO_0000163729" description="1-deoxy-D-xylulose 5-phosphate reductoisomerase">
    <location>
        <begin position="1"/>
        <end position="368"/>
    </location>
</feature>
<feature type="binding site" evidence="1">
    <location>
        <position position="10"/>
    </location>
    <ligand>
        <name>NADPH</name>
        <dbReference type="ChEBI" id="CHEBI:57783"/>
    </ligand>
</feature>
<feature type="binding site" evidence="1">
    <location>
        <position position="11"/>
    </location>
    <ligand>
        <name>NADPH</name>
        <dbReference type="ChEBI" id="CHEBI:57783"/>
    </ligand>
</feature>
<feature type="binding site" evidence="1">
    <location>
        <position position="12"/>
    </location>
    <ligand>
        <name>NADPH</name>
        <dbReference type="ChEBI" id="CHEBI:57783"/>
    </ligand>
</feature>
<feature type="binding site" evidence="1">
    <location>
        <position position="13"/>
    </location>
    <ligand>
        <name>NADPH</name>
        <dbReference type="ChEBI" id="CHEBI:57783"/>
    </ligand>
</feature>
<feature type="binding site" evidence="1">
    <location>
        <position position="38"/>
    </location>
    <ligand>
        <name>NADPH</name>
        <dbReference type="ChEBI" id="CHEBI:57783"/>
    </ligand>
</feature>
<feature type="binding site" evidence="1">
    <location>
        <position position="100"/>
    </location>
    <ligand>
        <name>NADPH</name>
        <dbReference type="ChEBI" id="CHEBI:57783"/>
    </ligand>
</feature>
<feature type="binding site" evidence="1">
    <location>
        <position position="101"/>
    </location>
    <ligand>
        <name>1-deoxy-D-xylulose 5-phosphate</name>
        <dbReference type="ChEBI" id="CHEBI:57792"/>
    </ligand>
</feature>
<feature type="binding site" evidence="1">
    <location>
        <position position="102"/>
    </location>
    <ligand>
        <name>NADPH</name>
        <dbReference type="ChEBI" id="CHEBI:57783"/>
    </ligand>
</feature>
<feature type="binding site" evidence="1">
    <location>
        <position position="125"/>
    </location>
    <ligand>
        <name>Mn(2+)</name>
        <dbReference type="ChEBI" id="CHEBI:29035"/>
    </ligand>
</feature>
<feature type="binding site" evidence="1">
    <location>
        <position position="126"/>
    </location>
    <ligand>
        <name>1-deoxy-D-xylulose 5-phosphate</name>
        <dbReference type="ChEBI" id="CHEBI:57792"/>
    </ligand>
</feature>
<feature type="binding site" evidence="1">
    <location>
        <position position="127"/>
    </location>
    <ligand>
        <name>1-deoxy-D-xylulose 5-phosphate</name>
        <dbReference type="ChEBI" id="CHEBI:57792"/>
    </ligand>
</feature>
<feature type="binding site" evidence="1">
    <location>
        <position position="127"/>
    </location>
    <ligand>
        <name>Mn(2+)</name>
        <dbReference type="ChEBI" id="CHEBI:29035"/>
    </ligand>
</feature>
<feature type="binding site" evidence="1">
    <location>
        <position position="151"/>
    </location>
    <ligand>
        <name>1-deoxy-D-xylulose 5-phosphate</name>
        <dbReference type="ChEBI" id="CHEBI:57792"/>
    </ligand>
</feature>
<feature type="binding site" evidence="1">
    <location>
        <position position="172"/>
    </location>
    <ligand>
        <name>1-deoxy-D-xylulose 5-phosphate</name>
        <dbReference type="ChEBI" id="CHEBI:57792"/>
    </ligand>
</feature>
<feature type="binding site" evidence="1">
    <location>
        <position position="178"/>
    </location>
    <ligand>
        <name>NADPH</name>
        <dbReference type="ChEBI" id="CHEBI:57783"/>
    </ligand>
</feature>
<feature type="binding site" evidence="1">
    <location>
        <position position="185"/>
    </location>
    <ligand>
        <name>1-deoxy-D-xylulose 5-phosphate</name>
        <dbReference type="ChEBI" id="CHEBI:57792"/>
    </ligand>
</feature>
<feature type="binding site" evidence="1">
    <location>
        <position position="190"/>
    </location>
    <ligand>
        <name>1-deoxy-D-xylulose 5-phosphate</name>
        <dbReference type="ChEBI" id="CHEBI:57792"/>
    </ligand>
</feature>
<feature type="binding site" evidence="1">
    <location>
        <position position="191"/>
    </location>
    <ligand>
        <name>1-deoxy-D-xylulose 5-phosphate</name>
        <dbReference type="ChEBI" id="CHEBI:57792"/>
    </ligand>
</feature>
<feature type="binding site" evidence="1">
    <location>
        <position position="194"/>
    </location>
    <ligand>
        <name>1-deoxy-D-xylulose 5-phosphate</name>
        <dbReference type="ChEBI" id="CHEBI:57792"/>
    </ligand>
</feature>
<feature type="binding site" evidence="1">
    <location>
        <position position="194"/>
    </location>
    <ligand>
        <name>Mn(2+)</name>
        <dbReference type="ChEBI" id="CHEBI:29035"/>
    </ligand>
</feature>
<organism>
    <name type="scientific">Tropheryma whipplei (strain Twist)</name>
    <name type="common">Whipple's bacillus</name>
    <dbReference type="NCBI Taxonomy" id="203267"/>
    <lineage>
        <taxon>Bacteria</taxon>
        <taxon>Bacillati</taxon>
        <taxon>Actinomycetota</taxon>
        <taxon>Actinomycetes</taxon>
        <taxon>Micrococcales</taxon>
        <taxon>Tropherymataceae</taxon>
        <taxon>Tropheryma</taxon>
    </lineage>
</organism>
<dbReference type="EC" id="1.1.1.267" evidence="1"/>
<dbReference type="EMBL" id="AE014184">
    <property type="protein sequence ID" value="AAO44186.1"/>
    <property type="molecule type" value="Genomic_DNA"/>
</dbReference>
<dbReference type="RefSeq" id="WP_011102339.1">
    <property type="nucleotide sequence ID" value="NC_004572.3"/>
</dbReference>
<dbReference type="SMR" id="Q83GY8"/>
<dbReference type="STRING" id="203267.TWT_089"/>
<dbReference type="KEGG" id="twh:TWT_089"/>
<dbReference type="eggNOG" id="COG0743">
    <property type="taxonomic scope" value="Bacteria"/>
</dbReference>
<dbReference type="HOGENOM" id="CLU_035714_4_0_11"/>
<dbReference type="OrthoDB" id="9806546at2"/>
<dbReference type="UniPathway" id="UPA00056">
    <property type="reaction ID" value="UER00092"/>
</dbReference>
<dbReference type="Proteomes" id="UP000002200">
    <property type="component" value="Chromosome"/>
</dbReference>
<dbReference type="GO" id="GO:0030604">
    <property type="term" value="F:1-deoxy-D-xylulose-5-phosphate reductoisomerase activity"/>
    <property type="evidence" value="ECO:0007669"/>
    <property type="project" value="UniProtKB-UniRule"/>
</dbReference>
<dbReference type="GO" id="GO:0030145">
    <property type="term" value="F:manganese ion binding"/>
    <property type="evidence" value="ECO:0007669"/>
    <property type="project" value="TreeGrafter"/>
</dbReference>
<dbReference type="GO" id="GO:0070402">
    <property type="term" value="F:NADPH binding"/>
    <property type="evidence" value="ECO:0007669"/>
    <property type="project" value="InterPro"/>
</dbReference>
<dbReference type="GO" id="GO:0051484">
    <property type="term" value="P:isopentenyl diphosphate biosynthetic process, methylerythritol 4-phosphate pathway involved in terpenoid biosynthetic process"/>
    <property type="evidence" value="ECO:0007669"/>
    <property type="project" value="TreeGrafter"/>
</dbReference>
<dbReference type="Gene3D" id="1.10.1740.10">
    <property type="match status" value="1"/>
</dbReference>
<dbReference type="Gene3D" id="3.40.50.720">
    <property type="entry name" value="NAD(P)-binding Rossmann-like Domain"/>
    <property type="match status" value="2"/>
</dbReference>
<dbReference type="HAMAP" id="MF_00183">
    <property type="entry name" value="DXP_reductoisom"/>
    <property type="match status" value="1"/>
</dbReference>
<dbReference type="InterPro" id="IPR003821">
    <property type="entry name" value="DXP_reductoisomerase"/>
</dbReference>
<dbReference type="InterPro" id="IPR013644">
    <property type="entry name" value="DXP_reductoisomerase_C"/>
</dbReference>
<dbReference type="InterPro" id="IPR013512">
    <property type="entry name" value="DXP_reductoisomerase_N"/>
</dbReference>
<dbReference type="InterPro" id="IPR026877">
    <property type="entry name" value="DXPR_C"/>
</dbReference>
<dbReference type="InterPro" id="IPR036169">
    <property type="entry name" value="DXPR_C_sf"/>
</dbReference>
<dbReference type="InterPro" id="IPR036291">
    <property type="entry name" value="NAD(P)-bd_dom_sf"/>
</dbReference>
<dbReference type="NCBIfam" id="TIGR00243">
    <property type="entry name" value="Dxr"/>
    <property type="match status" value="1"/>
</dbReference>
<dbReference type="PANTHER" id="PTHR30525">
    <property type="entry name" value="1-DEOXY-D-XYLULOSE 5-PHOSPHATE REDUCTOISOMERASE"/>
    <property type="match status" value="1"/>
</dbReference>
<dbReference type="PANTHER" id="PTHR30525:SF0">
    <property type="entry name" value="1-DEOXY-D-XYLULOSE 5-PHOSPHATE REDUCTOISOMERASE, CHLOROPLASTIC"/>
    <property type="match status" value="1"/>
</dbReference>
<dbReference type="Pfam" id="PF08436">
    <property type="entry name" value="DXP_redisom_C"/>
    <property type="match status" value="1"/>
</dbReference>
<dbReference type="Pfam" id="PF02670">
    <property type="entry name" value="DXP_reductoisom"/>
    <property type="match status" value="2"/>
</dbReference>
<dbReference type="Pfam" id="PF13288">
    <property type="entry name" value="DXPR_C"/>
    <property type="match status" value="1"/>
</dbReference>
<dbReference type="PIRSF" id="PIRSF006205">
    <property type="entry name" value="Dxp_reductismrs"/>
    <property type="match status" value="1"/>
</dbReference>
<dbReference type="SUPFAM" id="SSF69055">
    <property type="entry name" value="1-deoxy-D-xylulose-5-phosphate reductoisomerase, C-terminal domain"/>
    <property type="match status" value="1"/>
</dbReference>
<dbReference type="SUPFAM" id="SSF55347">
    <property type="entry name" value="Glyceraldehyde-3-phosphate dehydrogenase-like, C-terminal domain"/>
    <property type="match status" value="1"/>
</dbReference>
<dbReference type="SUPFAM" id="SSF51735">
    <property type="entry name" value="NAD(P)-binding Rossmann-fold domains"/>
    <property type="match status" value="1"/>
</dbReference>
<protein>
    <recommendedName>
        <fullName evidence="1">1-deoxy-D-xylulose 5-phosphate reductoisomerase</fullName>
        <shortName evidence="1">DXP reductoisomerase</shortName>
        <ecNumber evidence="1">1.1.1.267</ecNumber>
    </recommendedName>
    <alternativeName>
        <fullName evidence="1">1-deoxyxylulose-5-phosphate reductoisomerase</fullName>
    </alternativeName>
    <alternativeName>
        <fullName evidence="1">2-C-methyl-D-erythritol 4-phosphate synthase</fullName>
    </alternativeName>
</protein>